<feature type="chain" id="PRO_0000166270" description="Glycine cleavage system H protein">
    <location>
        <begin position="1"/>
        <end position="131"/>
    </location>
</feature>
<feature type="domain" description="Lipoyl-binding" evidence="2">
    <location>
        <begin position="24"/>
        <end position="106"/>
    </location>
</feature>
<feature type="modified residue" description="N6-lipoyllysine" evidence="1">
    <location>
        <position position="65"/>
    </location>
</feature>
<proteinExistence type="inferred from homology"/>
<gene>
    <name evidence="1" type="primary">gcvH</name>
    <name type="ordered locus">PD_0148</name>
</gene>
<sequence>MSDIPGDLKFLKSHEWVRIEDNNRAIVGVSDHAQNLLGDLVYVELPNIGDHLDAGATAAVIESVKAASDIYSPVTGKVIEVNTTLSDKPETINEDPYGEGWIMVIEMQAPEEISNLLSPDDYTEVLESDEH</sequence>
<evidence type="ECO:0000255" key="1">
    <source>
        <dbReference type="HAMAP-Rule" id="MF_00272"/>
    </source>
</evidence>
<evidence type="ECO:0000255" key="2">
    <source>
        <dbReference type="PROSITE-ProRule" id="PRU01066"/>
    </source>
</evidence>
<protein>
    <recommendedName>
        <fullName evidence="1">Glycine cleavage system H protein</fullName>
    </recommendedName>
</protein>
<accession>Q87EZ7</accession>
<organism>
    <name type="scientific">Xylella fastidiosa (strain Temecula1 / ATCC 700964)</name>
    <dbReference type="NCBI Taxonomy" id="183190"/>
    <lineage>
        <taxon>Bacteria</taxon>
        <taxon>Pseudomonadati</taxon>
        <taxon>Pseudomonadota</taxon>
        <taxon>Gammaproteobacteria</taxon>
        <taxon>Lysobacterales</taxon>
        <taxon>Lysobacteraceae</taxon>
        <taxon>Xylella</taxon>
    </lineage>
</organism>
<dbReference type="EMBL" id="AE009442">
    <property type="protein sequence ID" value="AAO28042.1"/>
    <property type="molecule type" value="Genomic_DNA"/>
</dbReference>
<dbReference type="RefSeq" id="WP_004087179.1">
    <property type="nucleotide sequence ID" value="NC_004556.1"/>
</dbReference>
<dbReference type="SMR" id="Q87EZ7"/>
<dbReference type="GeneID" id="93903839"/>
<dbReference type="KEGG" id="xft:PD_0148"/>
<dbReference type="HOGENOM" id="CLU_097408_2_2_6"/>
<dbReference type="Proteomes" id="UP000002516">
    <property type="component" value="Chromosome"/>
</dbReference>
<dbReference type="GO" id="GO:0005829">
    <property type="term" value="C:cytosol"/>
    <property type="evidence" value="ECO:0007669"/>
    <property type="project" value="TreeGrafter"/>
</dbReference>
<dbReference type="GO" id="GO:0005960">
    <property type="term" value="C:glycine cleavage complex"/>
    <property type="evidence" value="ECO:0007669"/>
    <property type="project" value="InterPro"/>
</dbReference>
<dbReference type="GO" id="GO:0019464">
    <property type="term" value="P:glycine decarboxylation via glycine cleavage system"/>
    <property type="evidence" value="ECO:0007669"/>
    <property type="project" value="UniProtKB-UniRule"/>
</dbReference>
<dbReference type="CDD" id="cd06848">
    <property type="entry name" value="GCS_H"/>
    <property type="match status" value="1"/>
</dbReference>
<dbReference type="Gene3D" id="2.40.50.100">
    <property type="match status" value="1"/>
</dbReference>
<dbReference type="HAMAP" id="MF_00272">
    <property type="entry name" value="GcvH"/>
    <property type="match status" value="1"/>
</dbReference>
<dbReference type="InterPro" id="IPR003016">
    <property type="entry name" value="2-oxoA_DH_lipoyl-BS"/>
</dbReference>
<dbReference type="InterPro" id="IPR000089">
    <property type="entry name" value="Biotin_lipoyl"/>
</dbReference>
<dbReference type="InterPro" id="IPR002930">
    <property type="entry name" value="GCV_H"/>
</dbReference>
<dbReference type="InterPro" id="IPR033753">
    <property type="entry name" value="GCV_H/Fam206"/>
</dbReference>
<dbReference type="InterPro" id="IPR017453">
    <property type="entry name" value="GCV_H_sub"/>
</dbReference>
<dbReference type="InterPro" id="IPR011053">
    <property type="entry name" value="Single_hybrid_motif"/>
</dbReference>
<dbReference type="NCBIfam" id="TIGR00527">
    <property type="entry name" value="gcvH"/>
    <property type="match status" value="1"/>
</dbReference>
<dbReference type="NCBIfam" id="NF002270">
    <property type="entry name" value="PRK01202.1"/>
    <property type="match status" value="1"/>
</dbReference>
<dbReference type="PANTHER" id="PTHR11715">
    <property type="entry name" value="GLYCINE CLEAVAGE SYSTEM H PROTEIN"/>
    <property type="match status" value="1"/>
</dbReference>
<dbReference type="PANTHER" id="PTHR11715:SF3">
    <property type="entry name" value="GLYCINE CLEAVAGE SYSTEM H PROTEIN-RELATED"/>
    <property type="match status" value="1"/>
</dbReference>
<dbReference type="Pfam" id="PF01597">
    <property type="entry name" value="GCV_H"/>
    <property type="match status" value="1"/>
</dbReference>
<dbReference type="SUPFAM" id="SSF51230">
    <property type="entry name" value="Single hybrid motif"/>
    <property type="match status" value="1"/>
</dbReference>
<dbReference type="PROSITE" id="PS50968">
    <property type="entry name" value="BIOTINYL_LIPOYL"/>
    <property type="match status" value="1"/>
</dbReference>
<dbReference type="PROSITE" id="PS00189">
    <property type="entry name" value="LIPOYL"/>
    <property type="match status" value="1"/>
</dbReference>
<name>GCSH_XYLFT</name>
<comment type="function">
    <text evidence="1">The glycine cleavage system catalyzes the degradation of glycine. The H protein shuttles the methylamine group of glycine from the P protein to the T protein.</text>
</comment>
<comment type="cofactor">
    <cofactor evidence="1">
        <name>(R)-lipoate</name>
        <dbReference type="ChEBI" id="CHEBI:83088"/>
    </cofactor>
    <text evidence="1">Binds 1 lipoyl cofactor covalently.</text>
</comment>
<comment type="subunit">
    <text evidence="1">The glycine cleavage system is composed of four proteins: P, T, L and H.</text>
</comment>
<comment type="similarity">
    <text evidence="1">Belongs to the GcvH family.</text>
</comment>
<reference key="1">
    <citation type="journal article" date="2003" name="J. Bacteriol.">
        <title>Comparative analyses of the complete genome sequences of Pierce's disease and citrus variegated chlorosis strains of Xylella fastidiosa.</title>
        <authorList>
            <person name="Van Sluys M.A."/>
            <person name="de Oliveira M.C."/>
            <person name="Monteiro-Vitorello C.B."/>
            <person name="Miyaki C.Y."/>
            <person name="Furlan L.R."/>
            <person name="Camargo L.E.A."/>
            <person name="da Silva A.C.R."/>
            <person name="Moon D.H."/>
            <person name="Takita M.A."/>
            <person name="Lemos E.G.M."/>
            <person name="Machado M.A."/>
            <person name="Ferro M.I.T."/>
            <person name="da Silva F.R."/>
            <person name="Goldman M.H.S."/>
            <person name="Goldman G.H."/>
            <person name="Lemos M.V.F."/>
            <person name="El-Dorry H."/>
            <person name="Tsai S.M."/>
            <person name="Carrer H."/>
            <person name="Carraro D.M."/>
            <person name="de Oliveira R.C."/>
            <person name="Nunes L.R."/>
            <person name="Siqueira W.J."/>
            <person name="Coutinho L.L."/>
            <person name="Kimura E.T."/>
            <person name="Ferro E.S."/>
            <person name="Harakava R."/>
            <person name="Kuramae E.E."/>
            <person name="Marino C.L."/>
            <person name="Giglioti E."/>
            <person name="Abreu I.L."/>
            <person name="Alves L.M.C."/>
            <person name="do Amaral A.M."/>
            <person name="Baia G.S."/>
            <person name="Blanco S.R."/>
            <person name="Brito M.S."/>
            <person name="Cannavan F.S."/>
            <person name="Celestino A.V."/>
            <person name="da Cunha A.F."/>
            <person name="Fenille R.C."/>
            <person name="Ferro J.A."/>
            <person name="Formighieri E.F."/>
            <person name="Kishi L.T."/>
            <person name="Leoni S.G."/>
            <person name="Oliveira A.R."/>
            <person name="Rosa V.E. Jr."/>
            <person name="Sassaki F.T."/>
            <person name="Sena J.A.D."/>
            <person name="de Souza A.A."/>
            <person name="Truffi D."/>
            <person name="Tsukumo F."/>
            <person name="Yanai G.M."/>
            <person name="Zaros L.G."/>
            <person name="Civerolo E.L."/>
            <person name="Simpson A.J.G."/>
            <person name="Almeida N.F. Jr."/>
            <person name="Setubal J.C."/>
            <person name="Kitajima J.P."/>
        </authorList>
    </citation>
    <scope>NUCLEOTIDE SEQUENCE [LARGE SCALE GENOMIC DNA]</scope>
    <source>
        <strain>Temecula1 / ATCC 700964</strain>
    </source>
</reference>
<keyword id="KW-0450">Lipoyl</keyword>
<keyword id="KW-1185">Reference proteome</keyword>